<feature type="chain" id="PRO_1000190793" description="Lipoprotein signal peptidase">
    <location>
        <begin position="1"/>
        <end position="155"/>
    </location>
</feature>
<feature type="transmembrane region" description="Helical" evidence="1">
    <location>
        <begin position="52"/>
        <end position="72"/>
    </location>
</feature>
<feature type="transmembrane region" description="Helical" evidence="1">
    <location>
        <begin position="85"/>
        <end position="105"/>
    </location>
</feature>
<feature type="transmembrane region" description="Helical" evidence="1">
    <location>
        <begin position="124"/>
        <end position="144"/>
    </location>
</feature>
<feature type="active site" evidence="1">
    <location>
        <position position="111"/>
    </location>
</feature>
<feature type="active site" evidence="1">
    <location>
        <position position="129"/>
    </location>
</feature>
<comment type="function">
    <text evidence="1">This protein specifically catalyzes the removal of signal peptides from prolipoproteins.</text>
</comment>
<comment type="catalytic activity">
    <reaction evidence="1">
        <text>Release of signal peptides from bacterial membrane prolipoproteins. Hydrolyzes -Xaa-Yaa-Zaa-|-(S,diacylglyceryl)Cys-, in which Xaa is hydrophobic (preferably Leu), and Yaa (Ala or Ser) and Zaa (Gly or Ala) have small, neutral side chains.</text>
        <dbReference type="EC" id="3.4.23.36"/>
    </reaction>
</comment>
<comment type="pathway">
    <text evidence="1">Protein modification; lipoprotein biosynthesis (signal peptide cleavage).</text>
</comment>
<comment type="subcellular location">
    <subcellularLocation>
        <location evidence="1">Cell membrane</location>
        <topology evidence="1">Multi-pass membrane protein</topology>
    </subcellularLocation>
</comment>
<comment type="similarity">
    <text evidence="1">Belongs to the peptidase A8 family.</text>
</comment>
<keyword id="KW-0064">Aspartyl protease</keyword>
<keyword id="KW-1003">Cell membrane</keyword>
<keyword id="KW-0378">Hydrolase</keyword>
<keyword id="KW-0472">Membrane</keyword>
<keyword id="KW-0645">Protease</keyword>
<keyword id="KW-0812">Transmembrane</keyword>
<keyword id="KW-1133">Transmembrane helix</keyword>
<protein>
    <recommendedName>
        <fullName evidence="1">Lipoprotein signal peptidase</fullName>
        <ecNumber evidence="1">3.4.23.36</ecNumber>
    </recommendedName>
    <alternativeName>
        <fullName evidence="1">Prolipoprotein signal peptidase</fullName>
    </alternativeName>
    <alternativeName>
        <fullName evidence="1">Signal peptidase II</fullName>
        <shortName evidence="1">SPase II</shortName>
    </alternativeName>
</protein>
<reference key="1">
    <citation type="journal article" date="2007" name="PLoS ONE">
        <title>Paradoxical DNA repair and peroxide resistance gene conservation in Bacillus pumilus SAFR-032.</title>
        <authorList>
            <person name="Gioia J."/>
            <person name="Yerrapragada S."/>
            <person name="Qin X."/>
            <person name="Jiang H."/>
            <person name="Igboeli O.C."/>
            <person name="Muzny D."/>
            <person name="Dugan-Rocha S."/>
            <person name="Ding Y."/>
            <person name="Hawes A."/>
            <person name="Liu W."/>
            <person name="Perez L."/>
            <person name="Kovar C."/>
            <person name="Dinh H."/>
            <person name="Lee S."/>
            <person name="Nazareth L."/>
            <person name="Blyth P."/>
            <person name="Holder M."/>
            <person name="Buhay C."/>
            <person name="Tirumalai M.R."/>
            <person name="Liu Y."/>
            <person name="Dasgupta I."/>
            <person name="Bokhetache L."/>
            <person name="Fujita M."/>
            <person name="Karouia F."/>
            <person name="Eswara Moorthy P."/>
            <person name="Siefert J."/>
            <person name="Uzman A."/>
            <person name="Buzumbo P."/>
            <person name="Verma A."/>
            <person name="Zwiya H."/>
            <person name="McWilliams B.D."/>
            <person name="Olowu A."/>
            <person name="Clinkenbeard K.D."/>
            <person name="Newcombe D."/>
            <person name="Golebiewski L."/>
            <person name="Petrosino J.F."/>
            <person name="Nicholson W.L."/>
            <person name="Fox G.E."/>
            <person name="Venkateswaran K."/>
            <person name="Highlander S.K."/>
            <person name="Weinstock G.M."/>
        </authorList>
    </citation>
    <scope>NUCLEOTIDE SEQUENCE [LARGE SCALE GENOMIC DNA]</scope>
    <source>
        <strain>SAFR-032</strain>
    </source>
</reference>
<sequence length="155" mass="17656">MFYYIIAFVMICLDQLTKWLIVKNMMLGDSYPVIDGFFYITSHRNSGAAWGILQGQMWFFYVITLVVIAGIVYYLQKHGQKDKLLGVALALMLGGAIGNFIDRVFRQEVVDFAHFVFGNYHYPIFNIADSSLCVGVILLFIQMLLDGKKTKESTT</sequence>
<gene>
    <name evidence="1" type="primary">lspA</name>
    <name type="ordered locus">BPUM_1444</name>
</gene>
<evidence type="ECO:0000255" key="1">
    <source>
        <dbReference type="HAMAP-Rule" id="MF_00161"/>
    </source>
</evidence>
<name>LSPA_BACP2</name>
<organism>
    <name type="scientific">Bacillus pumilus (strain SAFR-032)</name>
    <dbReference type="NCBI Taxonomy" id="315750"/>
    <lineage>
        <taxon>Bacteria</taxon>
        <taxon>Bacillati</taxon>
        <taxon>Bacillota</taxon>
        <taxon>Bacilli</taxon>
        <taxon>Bacillales</taxon>
        <taxon>Bacillaceae</taxon>
        <taxon>Bacillus</taxon>
    </lineage>
</organism>
<accession>A8FD10</accession>
<proteinExistence type="inferred from homology"/>
<dbReference type="EC" id="3.4.23.36" evidence="1"/>
<dbReference type="EMBL" id="CP000813">
    <property type="protein sequence ID" value="ABV62127.1"/>
    <property type="molecule type" value="Genomic_DNA"/>
</dbReference>
<dbReference type="RefSeq" id="WP_012009890.1">
    <property type="nucleotide sequence ID" value="NZ_VEIS01000003.1"/>
</dbReference>
<dbReference type="SMR" id="A8FD10"/>
<dbReference type="STRING" id="315750.BPUM_1444"/>
<dbReference type="GeneID" id="5620707"/>
<dbReference type="KEGG" id="bpu:BPUM_1444"/>
<dbReference type="eggNOG" id="COG0597">
    <property type="taxonomic scope" value="Bacteria"/>
</dbReference>
<dbReference type="HOGENOM" id="CLU_083252_3_0_9"/>
<dbReference type="OrthoDB" id="9810259at2"/>
<dbReference type="UniPathway" id="UPA00665"/>
<dbReference type="Proteomes" id="UP000001355">
    <property type="component" value="Chromosome"/>
</dbReference>
<dbReference type="GO" id="GO:0005886">
    <property type="term" value="C:plasma membrane"/>
    <property type="evidence" value="ECO:0007669"/>
    <property type="project" value="UniProtKB-SubCell"/>
</dbReference>
<dbReference type="GO" id="GO:0004190">
    <property type="term" value="F:aspartic-type endopeptidase activity"/>
    <property type="evidence" value="ECO:0007669"/>
    <property type="project" value="UniProtKB-UniRule"/>
</dbReference>
<dbReference type="GO" id="GO:0006508">
    <property type="term" value="P:proteolysis"/>
    <property type="evidence" value="ECO:0007669"/>
    <property type="project" value="UniProtKB-KW"/>
</dbReference>
<dbReference type="HAMAP" id="MF_00161">
    <property type="entry name" value="LspA"/>
    <property type="match status" value="1"/>
</dbReference>
<dbReference type="InterPro" id="IPR001872">
    <property type="entry name" value="Peptidase_A8"/>
</dbReference>
<dbReference type="NCBIfam" id="TIGR00077">
    <property type="entry name" value="lspA"/>
    <property type="match status" value="1"/>
</dbReference>
<dbReference type="PANTHER" id="PTHR33695">
    <property type="entry name" value="LIPOPROTEIN SIGNAL PEPTIDASE"/>
    <property type="match status" value="1"/>
</dbReference>
<dbReference type="PANTHER" id="PTHR33695:SF1">
    <property type="entry name" value="LIPOPROTEIN SIGNAL PEPTIDASE"/>
    <property type="match status" value="1"/>
</dbReference>
<dbReference type="Pfam" id="PF01252">
    <property type="entry name" value="Peptidase_A8"/>
    <property type="match status" value="1"/>
</dbReference>
<dbReference type="PRINTS" id="PR00781">
    <property type="entry name" value="LIPOSIGPTASE"/>
</dbReference>
<dbReference type="PROSITE" id="PS00855">
    <property type="entry name" value="SPASE_II"/>
    <property type="match status" value="1"/>
</dbReference>